<organism>
    <name type="scientific">Homo sapiens</name>
    <name type="common">Human</name>
    <dbReference type="NCBI Taxonomy" id="9606"/>
    <lineage>
        <taxon>Eukaryota</taxon>
        <taxon>Metazoa</taxon>
        <taxon>Chordata</taxon>
        <taxon>Craniata</taxon>
        <taxon>Vertebrata</taxon>
        <taxon>Euteleostomi</taxon>
        <taxon>Mammalia</taxon>
        <taxon>Eutheria</taxon>
        <taxon>Euarchontoglires</taxon>
        <taxon>Primates</taxon>
        <taxon>Haplorrhini</taxon>
        <taxon>Catarrhini</taxon>
        <taxon>Hominidae</taxon>
        <taxon>Homo</taxon>
    </lineage>
</organism>
<evidence type="ECO:0000250" key="1"/>
<evidence type="ECO:0000250" key="2">
    <source>
        <dbReference type="UniProtKB" id="P97367"/>
    </source>
</evidence>
<evidence type="ECO:0000255" key="3"/>
<evidence type="ECO:0000255" key="4">
    <source>
        <dbReference type="PROSITE-ProRule" id="PRU00108"/>
    </source>
</evidence>
<evidence type="ECO:0000256" key="5">
    <source>
        <dbReference type="SAM" id="MobiDB-lite"/>
    </source>
</evidence>
<evidence type="ECO:0000269" key="6">
    <source>
    </source>
</evidence>
<evidence type="ECO:0000269" key="7">
    <source>
    </source>
</evidence>
<evidence type="ECO:0000269" key="8">
    <source>
    </source>
</evidence>
<evidence type="ECO:0000269" key="9">
    <source>
    </source>
</evidence>
<evidence type="ECO:0000269" key="10">
    <source>
    </source>
</evidence>
<evidence type="ECO:0000269" key="11">
    <source>
    </source>
</evidence>
<evidence type="ECO:0000269" key="12">
    <source>
    </source>
</evidence>
<evidence type="ECO:0000269" key="13">
    <source>
    </source>
</evidence>
<evidence type="ECO:0000269" key="14">
    <source>
    </source>
</evidence>
<evidence type="ECO:0000269" key="15">
    <source>
    </source>
</evidence>
<evidence type="ECO:0000269" key="16">
    <source ref="16"/>
</evidence>
<evidence type="ECO:0000303" key="17">
    <source>
    </source>
</evidence>
<evidence type="ECO:0000303" key="18">
    <source>
    </source>
</evidence>
<evidence type="ECO:0000303" key="19">
    <source>
    </source>
</evidence>
<evidence type="ECO:0000303" key="20">
    <source>
    </source>
</evidence>
<evidence type="ECO:0000305" key="21"/>
<evidence type="ECO:0000305" key="22">
    <source>
    </source>
</evidence>
<evidence type="ECO:0000305" key="23">
    <source ref="16"/>
</evidence>
<evidence type="ECO:0007744" key="24">
    <source>
        <dbReference type="PDB" id="3K2A"/>
    </source>
</evidence>
<evidence type="ECO:0007744" key="25">
    <source>
        <dbReference type="PDB" id="4XRM"/>
    </source>
</evidence>
<evidence type="ECO:0007744" key="26">
    <source>
        <dbReference type="PDB" id="5BNG"/>
    </source>
</evidence>
<evidence type="ECO:0007744" key="27">
    <source>
        <dbReference type="PDB" id="5EG0"/>
    </source>
</evidence>
<evidence type="ECO:0007829" key="28">
    <source>
        <dbReference type="PDB" id="3K2A"/>
    </source>
</evidence>
<evidence type="ECO:0007829" key="29">
    <source>
        <dbReference type="PDB" id="4XRM"/>
    </source>
</evidence>
<reference key="1">
    <citation type="journal article" date="2000" name="J. Biol. Chem.">
        <title>Three-amino acid extension loop homeodomain proteins Meis2 and TGIF differentially regulate transcription.</title>
        <authorList>
            <person name="Yang Y."/>
            <person name="Hwang C.K."/>
            <person name="D'Souza U.M."/>
            <person name="Lee S.-H."/>
            <person name="Junn E."/>
            <person name="Mouradian M.M."/>
        </authorList>
    </citation>
    <scope>NUCLEOTIDE SEQUENCE [MRNA] (ISOFORMS 1; 2; 3; 4 AND 5)</scope>
    <scope>FUNCTION</scope>
    <source>
        <tissue>Brain</tissue>
    </source>
</reference>
<reference key="2">
    <citation type="journal article" date="2004" name="Nat. Genet.">
        <title>Complete sequencing and characterization of 21,243 full-length human cDNAs.</title>
        <authorList>
            <person name="Ota T."/>
            <person name="Suzuki Y."/>
            <person name="Nishikawa T."/>
            <person name="Otsuki T."/>
            <person name="Sugiyama T."/>
            <person name="Irie R."/>
            <person name="Wakamatsu A."/>
            <person name="Hayashi K."/>
            <person name="Sato H."/>
            <person name="Nagai K."/>
            <person name="Kimura K."/>
            <person name="Makita H."/>
            <person name="Sekine M."/>
            <person name="Obayashi M."/>
            <person name="Nishi T."/>
            <person name="Shibahara T."/>
            <person name="Tanaka T."/>
            <person name="Ishii S."/>
            <person name="Yamamoto J."/>
            <person name="Saito K."/>
            <person name="Kawai Y."/>
            <person name="Isono Y."/>
            <person name="Nakamura Y."/>
            <person name="Nagahari K."/>
            <person name="Murakami K."/>
            <person name="Yasuda T."/>
            <person name="Iwayanagi T."/>
            <person name="Wagatsuma M."/>
            <person name="Shiratori A."/>
            <person name="Sudo H."/>
            <person name="Hosoiri T."/>
            <person name="Kaku Y."/>
            <person name="Kodaira H."/>
            <person name="Kondo H."/>
            <person name="Sugawara M."/>
            <person name="Takahashi M."/>
            <person name="Kanda K."/>
            <person name="Yokoi T."/>
            <person name="Furuya T."/>
            <person name="Kikkawa E."/>
            <person name="Omura Y."/>
            <person name="Abe K."/>
            <person name="Kamihara K."/>
            <person name="Katsuta N."/>
            <person name="Sato K."/>
            <person name="Tanikawa M."/>
            <person name="Yamazaki M."/>
            <person name="Ninomiya K."/>
            <person name="Ishibashi T."/>
            <person name="Yamashita H."/>
            <person name="Murakawa K."/>
            <person name="Fujimori K."/>
            <person name="Tanai H."/>
            <person name="Kimata M."/>
            <person name="Watanabe M."/>
            <person name="Hiraoka S."/>
            <person name="Chiba Y."/>
            <person name="Ishida S."/>
            <person name="Ono Y."/>
            <person name="Takiguchi S."/>
            <person name="Watanabe S."/>
            <person name="Yosida M."/>
            <person name="Hotuta T."/>
            <person name="Kusano J."/>
            <person name="Kanehori K."/>
            <person name="Takahashi-Fujii A."/>
            <person name="Hara H."/>
            <person name="Tanase T.-O."/>
            <person name="Nomura Y."/>
            <person name="Togiya S."/>
            <person name="Komai F."/>
            <person name="Hara R."/>
            <person name="Takeuchi K."/>
            <person name="Arita M."/>
            <person name="Imose N."/>
            <person name="Musashino K."/>
            <person name="Yuuki H."/>
            <person name="Oshima A."/>
            <person name="Sasaki N."/>
            <person name="Aotsuka S."/>
            <person name="Yoshikawa Y."/>
            <person name="Matsunawa H."/>
            <person name="Ichihara T."/>
            <person name="Shiohata N."/>
            <person name="Sano S."/>
            <person name="Moriya S."/>
            <person name="Momiyama H."/>
            <person name="Satoh N."/>
            <person name="Takami S."/>
            <person name="Terashima Y."/>
            <person name="Suzuki O."/>
            <person name="Nakagawa S."/>
            <person name="Senoh A."/>
            <person name="Mizoguchi H."/>
            <person name="Goto Y."/>
            <person name="Shimizu F."/>
            <person name="Wakebe H."/>
            <person name="Hishigaki H."/>
            <person name="Watanabe T."/>
            <person name="Sugiyama A."/>
            <person name="Takemoto M."/>
            <person name="Kawakami B."/>
            <person name="Yamazaki M."/>
            <person name="Watanabe K."/>
            <person name="Kumagai A."/>
            <person name="Itakura S."/>
            <person name="Fukuzumi Y."/>
            <person name="Fujimori Y."/>
            <person name="Komiyama M."/>
            <person name="Tashiro H."/>
            <person name="Tanigami A."/>
            <person name="Fujiwara T."/>
            <person name="Ono T."/>
            <person name="Yamada K."/>
            <person name="Fujii Y."/>
            <person name="Ozaki K."/>
            <person name="Hirao M."/>
            <person name="Ohmori Y."/>
            <person name="Kawabata A."/>
            <person name="Hikiji T."/>
            <person name="Kobatake N."/>
            <person name="Inagaki H."/>
            <person name="Ikema Y."/>
            <person name="Okamoto S."/>
            <person name="Okitani R."/>
            <person name="Kawakami T."/>
            <person name="Noguchi S."/>
            <person name="Itoh T."/>
            <person name="Shigeta K."/>
            <person name="Senba T."/>
            <person name="Matsumura K."/>
            <person name="Nakajima Y."/>
            <person name="Mizuno T."/>
            <person name="Morinaga M."/>
            <person name="Sasaki M."/>
            <person name="Togashi T."/>
            <person name="Oyama M."/>
            <person name="Hata H."/>
            <person name="Watanabe M."/>
            <person name="Komatsu T."/>
            <person name="Mizushima-Sugano J."/>
            <person name="Satoh T."/>
            <person name="Shirai Y."/>
            <person name="Takahashi Y."/>
            <person name="Nakagawa K."/>
            <person name="Okumura K."/>
            <person name="Nagase T."/>
            <person name="Nomura N."/>
            <person name="Kikuchi H."/>
            <person name="Masuho Y."/>
            <person name="Yamashita R."/>
            <person name="Nakai K."/>
            <person name="Yada T."/>
            <person name="Nakamura Y."/>
            <person name="Ohara O."/>
            <person name="Isogai T."/>
            <person name="Sugano S."/>
        </authorList>
    </citation>
    <scope>NUCLEOTIDE SEQUENCE [LARGE SCALE MRNA] (ISOFORMS 6 AND 8)</scope>
    <source>
        <tissue>Tongue</tissue>
    </source>
</reference>
<reference key="3">
    <citation type="journal article" date="2006" name="Nature">
        <title>Analysis of the DNA sequence and duplication history of human chromosome 15.</title>
        <authorList>
            <person name="Zody M.C."/>
            <person name="Garber M."/>
            <person name="Sharpe T."/>
            <person name="Young S.K."/>
            <person name="Rowen L."/>
            <person name="O'Neill K."/>
            <person name="Whittaker C.A."/>
            <person name="Kamal M."/>
            <person name="Chang J.L."/>
            <person name="Cuomo C.A."/>
            <person name="Dewar K."/>
            <person name="FitzGerald M.G."/>
            <person name="Kodira C.D."/>
            <person name="Madan A."/>
            <person name="Qin S."/>
            <person name="Yang X."/>
            <person name="Abbasi N."/>
            <person name="Abouelleil A."/>
            <person name="Arachchi H.M."/>
            <person name="Baradarani L."/>
            <person name="Birditt B."/>
            <person name="Bloom S."/>
            <person name="Bloom T."/>
            <person name="Borowsky M.L."/>
            <person name="Burke J."/>
            <person name="Butler J."/>
            <person name="Cook A."/>
            <person name="DeArellano K."/>
            <person name="DeCaprio D."/>
            <person name="Dorris L. III"/>
            <person name="Dors M."/>
            <person name="Eichler E.E."/>
            <person name="Engels R."/>
            <person name="Fahey J."/>
            <person name="Fleetwood P."/>
            <person name="Friedman C."/>
            <person name="Gearin G."/>
            <person name="Hall J.L."/>
            <person name="Hensley G."/>
            <person name="Johnson E."/>
            <person name="Jones C."/>
            <person name="Kamat A."/>
            <person name="Kaur A."/>
            <person name="Locke D.P."/>
            <person name="Madan A."/>
            <person name="Munson G."/>
            <person name="Jaffe D.B."/>
            <person name="Lui A."/>
            <person name="Macdonald P."/>
            <person name="Mauceli E."/>
            <person name="Naylor J.W."/>
            <person name="Nesbitt R."/>
            <person name="Nicol R."/>
            <person name="O'Leary S.B."/>
            <person name="Ratcliffe A."/>
            <person name="Rounsley S."/>
            <person name="She X."/>
            <person name="Sneddon K.M.B."/>
            <person name="Stewart S."/>
            <person name="Sougnez C."/>
            <person name="Stone S.M."/>
            <person name="Topham K."/>
            <person name="Vincent D."/>
            <person name="Wang S."/>
            <person name="Zimmer A.R."/>
            <person name="Birren B.W."/>
            <person name="Hood L."/>
            <person name="Lander E.S."/>
            <person name="Nusbaum C."/>
        </authorList>
    </citation>
    <scope>NUCLEOTIDE SEQUENCE [LARGE SCALE GENOMIC DNA]</scope>
</reference>
<reference key="4">
    <citation type="submission" date="2005-09" db="EMBL/GenBank/DDBJ databases">
        <authorList>
            <person name="Mural R.J."/>
            <person name="Istrail S."/>
            <person name="Sutton G.G."/>
            <person name="Florea L."/>
            <person name="Halpern A.L."/>
            <person name="Mobarry C.M."/>
            <person name="Lippert R."/>
            <person name="Walenz B."/>
            <person name="Shatkay H."/>
            <person name="Dew I."/>
            <person name="Miller J.R."/>
            <person name="Flanigan M.J."/>
            <person name="Edwards N.J."/>
            <person name="Bolanos R."/>
            <person name="Fasulo D."/>
            <person name="Halldorsson B.V."/>
            <person name="Hannenhalli S."/>
            <person name="Turner R."/>
            <person name="Yooseph S."/>
            <person name="Lu F."/>
            <person name="Nusskern D.R."/>
            <person name="Shue B.C."/>
            <person name="Zheng X.H."/>
            <person name="Zhong F."/>
            <person name="Delcher A.L."/>
            <person name="Huson D.H."/>
            <person name="Kravitz S.A."/>
            <person name="Mouchard L."/>
            <person name="Reinert K."/>
            <person name="Remington K.A."/>
            <person name="Clark A.G."/>
            <person name="Waterman M.S."/>
            <person name="Eichler E.E."/>
            <person name="Adams M.D."/>
            <person name="Hunkapiller M.W."/>
            <person name="Myers E.W."/>
            <person name="Venter J.C."/>
        </authorList>
    </citation>
    <scope>NUCLEOTIDE SEQUENCE [LARGE SCALE GENOMIC DNA]</scope>
</reference>
<reference key="5">
    <citation type="journal article" date="2004" name="Genome Res.">
        <title>The status, quality, and expansion of the NIH full-length cDNA project: the Mammalian Gene Collection (MGC).</title>
        <authorList>
            <consortium name="The MGC Project Team"/>
        </authorList>
    </citation>
    <scope>NUCLEOTIDE SEQUENCE [LARGE SCALE MRNA] (ISOFORMS 4 AND 7)</scope>
    <source>
        <tissue>Muscle</tissue>
        <tissue>Testis</tissue>
    </source>
</reference>
<reference key="6">
    <citation type="journal article" date="1997" name="Mamm. Genome">
        <title>Chromosomal mapping to 15q14 and expression analysis of the human MEIS2 homeobox gene.</title>
        <authorList>
            <person name="Smith J.E. Jr."/>
            <person name="Afonja O."/>
            <person name="Yee H.T."/>
            <person name="Inghirami G."/>
            <person name="Takeshita K."/>
        </authorList>
    </citation>
    <scope>NUCLEOTIDE SEQUENCE [MRNA] OF 271-477 (ISOFORM 3)</scope>
</reference>
<reference key="7">
    <citation type="journal article" date="2001" name="J. Biol. Chem.">
        <title>DNA binding and transcriptional activation by a PDX1.PBX1b.MEIS2b trimer and cooperation with a pancreas-specific basic helix-loop-helix complex.</title>
        <authorList>
            <person name="Liu Y."/>
            <person name="MacDonald R.J."/>
            <person name="Swift G.H."/>
        </authorList>
    </citation>
    <scope>FUNCTION</scope>
</reference>
<reference key="8">
    <citation type="journal article" date="2010" name="Dev. Neurosci.">
        <title>Spatiotemporal distribution of PAX6 and MEIS2 expression and total cell numbers in the ganglionic eminence in the early developing human forebrain.</title>
        <authorList>
            <person name="Larsen K.B."/>
            <person name="Lutterodt M.C."/>
            <person name="Laursen H."/>
            <person name="Graem N."/>
            <person name="Pakkenberg B."/>
            <person name="Mollgard K."/>
            <person name="Moller M."/>
        </authorList>
    </citation>
    <scope>DEVELOPMENTAL STAGE</scope>
</reference>
<reference key="9">
    <citation type="journal article" date="2010" name="FEBS J.">
        <title>An autoinhibitory effect of the homothorax domain of Meis2.</title>
        <authorList>
            <person name="Hyman-Walsh C."/>
            <person name="Bjerke G.A."/>
            <person name="Wotton D."/>
        </authorList>
    </citation>
    <scope>DOMAIN</scope>
    <scope>INTERACTION WITH PBX1</scope>
    <scope>MUTAGENESIS OF LEU-85; LEU-88; 94-GLU--GLU-97; ILE-151; LEU-154; 158-LEU-LEU-159; LEU-161 AND ARG-332</scope>
</reference>
<reference key="10">
    <citation type="journal article" date="2010" name="Leuk. Res.">
        <title>MEIS proteins as partners of the TLX1/HOX11 oncoprotein.</title>
        <authorList>
            <person name="Milech N."/>
            <person name="Gottardo N.G."/>
            <person name="Ford J."/>
            <person name="D'Souza D."/>
            <person name="Greene W.K."/>
            <person name="Kees U.R."/>
            <person name="Watt P.M."/>
        </authorList>
    </citation>
    <scope>INTERACTION WITH TLX1</scope>
</reference>
<reference key="11">
    <citation type="journal article" date="2011" name="Mol. Cell. Biol.">
        <title>Cooperative transcriptional activation by Klf4, Meis2, and Pbx1.</title>
        <authorList>
            <person name="Bjerke G.A."/>
            <person name="Hyman-Walsh C."/>
            <person name="Wotton D."/>
        </authorList>
    </citation>
    <scope>FUNCTION</scope>
    <scope>INTERACTION WITH SP1; SP3 AND KLF4</scope>
    <scope>MUTAGENESIS OF ARG-332</scope>
</reference>
<reference key="12">
    <citation type="journal article" date="2013" name="J. Proteome Res.">
        <title>Toward a comprehensive characterization of a human cancer cell phosphoproteome.</title>
        <authorList>
            <person name="Zhou H."/>
            <person name="Di Palma S."/>
            <person name="Preisinger C."/>
            <person name="Peng M."/>
            <person name="Polat A.N."/>
            <person name="Heck A.J."/>
            <person name="Mohammed S."/>
        </authorList>
    </citation>
    <scope>IDENTIFICATION BY MASS SPECTROMETRY [LARGE SCALE ANALYSIS]</scope>
    <source>
        <tissue>Erythroleukemia</tissue>
    </source>
</reference>
<reference key="13">
    <citation type="journal article" date="2014" name="Am. J. Med. Genet. A">
        <title>Haploinsufficiency of MEIS2 is associated with orofacial clefting and learning disability.</title>
        <authorList>
            <person name="Johansson S."/>
            <person name="Berland S."/>
            <person name="Gradek G.A."/>
            <person name="Bongers E."/>
            <person name="de Leeuw N."/>
            <person name="Pfundt R."/>
            <person name="Fannemel M."/>
            <person name="Roedningen O."/>
            <person name="Brendehaug A."/>
            <person name="Haukanes B.I."/>
            <person name="Hovland R."/>
            <person name="Helland G."/>
            <person name="Houge G."/>
        </authorList>
    </citation>
    <scope>INVOLVEMENT IN CPCMR</scope>
</reference>
<reference evidence="24" key="14">
    <citation type="submission" date="2009-09" db="PDB data bank">
        <title>Crystal structure of the homeobox domain of human homeobox protein Meis2.</title>
        <authorList>
            <person name="Lam R."/>
            <person name="Soloveychik M."/>
            <person name="Battaile K.P."/>
            <person name="Romanov V."/>
            <person name="Lam K."/>
            <person name="Beletskaya I."/>
            <person name="Gordon E."/>
            <person name="Pai E.F."/>
            <person name="Chirgadze N.Y."/>
        </authorList>
    </citation>
    <scope>X-RAY CRYSTALLOGRAPHY (1.95 ANGSTROMS) OF 281-345</scope>
</reference>
<reference evidence="25 26" key="15">
    <citation type="journal article" date="2015" name="Nature">
        <title>DNA-dependent formation of transcription factor pairs alters their binding specificity.</title>
        <authorList>
            <person name="Jolma A."/>
            <person name="Yin Y."/>
            <person name="Nitta K.R."/>
            <person name="Dave K."/>
            <person name="Popov A."/>
            <person name="Taipale M."/>
            <person name="Enge M."/>
            <person name="Kivioja T."/>
            <person name="Morgunova E."/>
            <person name="Taipale J."/>
        </authorList>
    </citation>
    <scope>X-RAY CRYSTALLOGRAPHY (1.60 ANGSTROMS) OF 281-342 IN COMPLEX WITH DNA</scope>
    <scope>SUBUNIT</scope>
    <scope>DNA-BINDING</scope>
</reference>
<reference evidence="27" key="16">
    <citation type="submission" date="2015-10" db="PDB data bank">
        <title>Molecular basis of recognition of two distinct DNA sequences by a single transcription factor.</title>
        <authorList>
            <person name="Morgunova E."/>
            <person name="Yin Y."/>
            <person name="Jolma A."/>
            <person name="Popov A."/>
            <person name="Taipale J."/>
        </authorList>
    </citation>
    <scope>X-RAY CRYSTALLOGRAPHY (3.10 ANGSTROMS) OF 284-338 IN COMPLEX WITH HOXB13 AND DNA</scope>
    <scope>SUBUNIT</scope>
    <scope>DNA-BINDING</scope>
</reference>
<reference key="17">
    <citation type="journal article" date="2015" name="Am. J. Med. Genet. A">
        <title>MEIS2 involvement in cardiac development, cleft palate, and intellectual disability.</title>
        <authorList>
            <person name="Louw J.J."/>
            <person name="Corveleyn A."/>
            <person name="Jia Y."/>
            <person name="Hens G."/>
            <person name="Gewillig M."/>
            <person name="Devriendt K."/>
        </authorList>
    </citation>
    <scope>INVOLVEMENT IN CPCMR</scope>
    <scope>VARIANT CPCMR ARG-333 DEL</scope>
</reference>
<reference key="18">
    <citation type="journal article" date="2016" name="J. Hum. Genet.">
        <title>De novo MEIS2 mutation causes syndromic developmental delay with persistent gastro-esophageal reflux.</title>
        <authorList>
            <person name="Fujita A."/>
            <person name="Isidor B."/>
            <person name="Piloquet H."/>
            <person name="Corre P."/>
            <person name="Okamoto N."/>
            <person name="Nakashima M."/>
            <person name="Tsurusaki Y."/>
            <person name="Saitsu H."/>
            <person name="Miyake N."/>
            <person name="Matsumoto N."/>
        </authorList>
    </citation>
    <scope>INVOLVEMENT IN CPCMR</scope>
    <scope>VARIANT CPCMR 204-SER--GLN-477 DEL</scope>
</reference>
<proteinExistence type="evidence at protein level"/>
<comment type="function">
    <text evidence="6 7 11">Involved in transcriptional regulation. Binds to HOX or PBX proteins to form dimers, or to a DNA-bound dimer of PBX and HOX proteins and thought to have a role in stabilization of the homeoprotein-DNA complex. Isoform 3 is required for the activity of a PDX1:PBX1b:MEIS2b complex in pancreatic acinar cells involved in the transcriptional activation of the ELA1 enhancer; the complex binds to the enhancer B element and cooperates with the transcription factor 1 complex (PTF1) bound to the enhancer A element; MEIS2 is not involved in complex DNA-binding. Probably in complex with PBX1, is involved in transcriptional regulation by KLF4. Isoform 3 and isoform 4 can bind to a EPHA8 promoter sequence containing the DNA motif 5'-CGGTCA-3'; in cooperation with a PBX protein (such as PBX2) is proposed to be involved in the transcriptional activation of EPHA8 in the developing midbrain. May be involved in regulation of myeloid differentiation. Can bind to the DNA sequence 5'-TGACAG-3'in the activator ACT sequence of the D(1A) dopamine receptor (DRD1) promoter and activate DRD1 transcription; isoform 5 cannot activate DRD1 transcription.</text>
</comment>
<comment type="subunit">
    <text evidence="8 10 11 14 16">Monomer and homodimer (PubMed:26550823). Heterodimer with HOXB13 (Ref.16). Isoform 2 interacts with TLX1. Isoform 3 interacts with HOXA13 and PBX1 isoform PBX1b. Isoform 4 interacts with SP1, SP3 and KLF4. Isoform 4 and isoform 5 interact with PBX1 isoform PBX1a; the interaction partially relieves MEIS2 autoinhibition. Isoform 3 also known as MEIS2b is part of a PDX1:PBX1b:Meis2B complex; Meis2B is recruited by PBX1b and can be replaced by isoform 4 in a small fraction of complexes. Can form trimeric complexes including HOXB8 and PBX2 or PBX3.</text>
</comment>
<comment type="interaction">
    <interactant intactId="EBI-2804934">
        <id>O14770</id>
    </interactant>
    <interactant intactId="EBI-10181435">
        <id>Q5TZZ9</id>
        <label>ANXA1</label>
    </interactant>
    <organismsDiffer>false</organismsDiffer>
    <experiments>3</experiments>
</comment>
<comment type="interaction">
    <interactant intactId="EBI-2804934">
        <id>O14770</id>
    </interactant>
    <interactant intactId="EBI-946029">
        <id>Q6P1W5</id>
        <label>C1orf94</label>
    </interactant>
    <organismsDiffer>false</organismsDiffer>
    <experiments>3</experiments>
</comment>
<comment type="interaction">
    <interactant intactId="EBI-2804934">
        <id>O14770</id>
    </interactant>
    <interactant intactId="EBI-10181422">
        <id>A0A1B0GWI1</id>
        <label>CCDC196</label>
    </interactant>
    <organismsDiffer>false</organismsDiffer>
    <experiments>3</experiments>
</comment>
<comment type="interaction">
    <interactant intactId="EBI-2804934">
        <id>O14770</id>
    </interactant>
    <interactant intactId="EBI-9057006">
        <id>Q9UJX0</id>
        <label>OSGIN1</label>
    </interactant>
    <organismsDiffer>false</organismsDiffer>
    <experiments>4</experiments>
</comment>
<comment type="interaction">
    <interactant intactId="EBI-2804934">
        <id>O14770</id>
    </interactant>
    <interactant intactId="EBI-301611">
        <id>P40424</id>
        <label>PBX1</label>
    </interactant>
    <organismsDiffer>false</organismsDiffer>
    <experiments>3</experiments>
</comment>
<comment type="interaction">
    <interactant intactId="EBI-2804934">
        <id>O14770</id>
    </interactant>
    <interactant intactId="EBI-9676133">
        <id>P03363</id>
        <label>gag-pro-pol</label>
    </interactant>
    <organismsDiffer>true</organismsDiffer>
    <experiments>3</experiments>
</comment>
<comment type="interaction">
    <interactant intactId="EBI-6390216">
        <id>O14770-2</id>
    </interactant>
    <interactant intactId="EBI-2820655">
        <id>P31314</id>
        <label>TLX1</label>
    </interactant>
    <organismsDiffer>false</organismsDiffer>
    <experiments>4</experiments>
</comment>
<comment type="interaction">
    <interactant intactId="EBI-8025850">
        <id>O14770-4</id>
    </interactant>
    <interactant intactId="EBI-12015266">
        <id>P18825</id>
        <label>ADRA2C</label>
    </interactant>
    <organismsDiffer>false</organismsDiffer>
    <experiments>3</experiments>
</comment>
<comment type="interaction">
    <interactant intactId="EBI-8025850">
        <id>O14770-4</id>
    </interactant>
    <interactant intactId="EBI-713602">
        <id>Q9BQD7</id>
        <label>ANTKMT</label>
    </interactant>
    <organismsDiffer>false</organismsDiffer>
    <experiments>3</experiments>
</comment>
<comment type="interaction">
    <interactant intactId="EBI-8025850">
        <id>O14770-4</id>
    </interactant>
    <interactant intactId="EBI-953896">
        <id>Q9NP55</id>
        <label>BPIFA1</label>
    </interactant>
    <organismsDiffer>false</organismsDiffer>
    <experiments>3</experiments>
</comment>
<comment type="interaction">
    <interactant intactId="EBI-8025850">
        <id>O14770-4</id>
    </interactant>
    <interactant intactId="EBI-4314526">
        <id>Q16568</id>
        <label>CARTPT</label>
    </interactant>
    <organismsDiffer>false</organismsDiffer>
    <experiments>3</experiments>
</comment>
<comment type="interaction">
    <interactant intactId="EBI-8025850">
        <id>O14770-4</id>
    </interactant>
    <interactant intactId="EBI-10181422">
        <id>A0A1B0GWI1</id>
        <label>CCDC196</label>
    </interactant>
    <organismsDiffer>false</organismsDiffer>
    <experiments>3</experiments>
</comment>
<comment type="interaction">
    <interactant intactId="EBI-8025850">
        <id>O14770-4</id>
    </interactant>
    <interactant intactId="EBI-1188472">
        <id>P78358</id>
        <label>CTAG1B</label>
    </interactant>
    <organismsDiffer>false</organismsDiffer>
    <experiments>3</experiments>
</comment>
<comment type="interaction">
    <interactant intactId="EBI-8025850">
        <id>O14770-4</id>
    </interactant>
    <interactant intactId="EBI-373319">
        <id>Q96C01</id>
        <label>FAM136A</label>
    </interactant>
    <organismsDiffer>false</organismsDiffer>
    <experiments>3</experiments>
</comment>
<comment type="interaction">
    <interactant intactId="EBI-8025850">
        <id>O14770-4</id>
    </interactant>
    <interactant intactId="EBI-11978259">
        <id>Q92567-2</id>
        <label>FAM168A</label>
    </interactant>
    <organismsDiffer>false</organismsDiffer>
    <experiments>3</experiments>
</comment>
<comment type="interaction">
    <interactant intactId="EBI-8025850">
        <id>O14770-4</id>
    </interactant>
    <interactant intactId="EBI-947015">
        <id>P24592</id>
        <label>IGFBP6</label>
    </interactant>
    <organismsDiffer>false</organismsDiffer>
    <experiments>3</experiments>
</comment>
<comment type="interaction">
    <interactant intactId="EBI-8025850">
        <id>O14770-4</id>
    </interactant>
    <interactant intactId="EBI-712105">
        <id>Q13352</id>
        <label>ITGB3BP</label>
    </interactant>
    <organismsDiffer>false</organismsDiffer>
    <experiments>3</experiments>
</comment>
<comment type="interaction">
    <interactant intactId="EBI-8025850">
        <id>O14770-4</id>
    </interactant>
    <interactant intactId="EBI-10171774">
        <id>P60410</id>
        <label>KRTAP10-8</label>
    </interactant>
    <organismsDiffer>false</organismsDiffer>
    <experiments>3</experiments>
</comment>
<comment type="interaction">
    <interactant intactId="EBI-8025850">
        <id>O14770-4</id>
    </interactant>
    <interactant intactId="EBI-1052037">
        <id>Q8IUC1</id>
        <label>KRTAP11-1</label>
    </interactant>
    <organismsDiffer>false</organismsDiffer>
    <experiments>3</experiments>
</comment>
<comment type="interaction">
    <interactant intactId="EBI-8025850">
        <id>O14770-4</id>
    </interactant>
    <interactant intactId="EBI-12196745">
        <id>Q3LHN2</id>
        <label>KRTAP19-2</label>
    </interactant>
    <organismsDiffer>false</organismsDiffer>
    <experiments>5</experiments>
</comment>
<comment type="interaction">
    <interactant intactId="EBI-8025850">
        <id>O14770-4</id>
    </interactant>
    <interactant intactId="EBI-12805508">
        <id>Q3LI70</id>
        <label>KRTAP19-6</label>
    </interactant>
    <organismsDiffer>false</organismsDiffer>
    <experiments>3</experiments>
</comment>
<comment type="interaction">
    <interactant intactId="EBI-8025850">
        <id>O14770-4</id>
    </interactant>
    <interactant intactId="EBI-12111050">
        <id>Q3LI64</id>
        <label>KRTAP6-1</label>
    </interactant>
    <organismsDiffer>false</organismsDiffer>
    <experiments>3</experiments>
</comment>
<comment type="interaction">
    <interactant intactId="EBI-8025850">
        <id>O14770-4</id>
    </interactant>
    <interactant intactId="EBI-11962084">
        <id>Q3LI66</id>
        <label>KRTAP6-2</label>
    </interactant>
    <organismsDiffer>false</organismsDiffer>
    <experiments>5</experiments>
</comment>
<comment type="interaction">
    <interactant intactId="EBI-8025850">
        <id>O14770-4</id>
    </interactant>
    <interactant intactId="EBI-22311199">
        <id>Q3LI67</id>
        <label>KRTAP6-3</label>
    </interactant>
    <organismsDiffer>false</organismsDiffer>
    <experiments>3</experiments>
</comment>
<comment type="interaction">
    <interactant intactId="EBI-8025850">
        <id>O14770-4</id>
    </interactant>
    <interactant intactId="EBI-11987923">
        <id>P59942</id>
        <label>MCCD1</label>
    </interactant>
    <organismsDiffer>false</organismsDiffer>
    <experiments>3</experiments>
</comment>
<comment type="interaction">
    <interactant intactId="EBI-8025850">
        <id>O14770-4</id>
    </interactant>
    <interactant intactId="EBI-1246238">
        <id>P17568</id>
        <label>NDUFB7</label>
    </interactant>
    <organismsDiffer>false</organismsDiffer>
    <experiments>3</experiments>
</comment>
<comment type="interaction">
    <interactant intactId="EBI-8025850">
        <id>O14770-4</id>
    </interactant>
    <interactant intactId="EBI-17490746">
        <id>A8MTQ0</id>
        <label>NOTO</label>
    </interactant>
    <organismsDiffer>false</organismsDiffer>
    <experiments>3</experiments>
</comment>
<comment type="interaction">
    <interactant intactId="EBI-8025850">
        <id>O14770-4</id>
    </interactant>
    <interactant intactId="EBI-2811583">
        <id>Q9BVL2</id>
        <label>NUP58</label>
    </interactant>
    <organismsDiffer>false</organismsDiffer>
    <experiments>3</experiments>
</comment>
<comment type="interaction">
    <interactant intactId="EBI-8025850">
        <id>O14770-4</id>
    </interactant>
    <interactant intactId="EBI-536879">
        <id>O43482</id>
        <label>OIP5</label>
    </interactant>
    <organismsDiffer>false</organismsDiffer>
    <experiments>3</experiments>
</comment>
<comment type="interaction">
    <interactant intactId="EBI-8025850">
        <id>O14770-4</id>
    </interactant>
    <interactant intactId="EBI-301611">
        <id>P40424</id>
        <label>PBX1</label>
    </interactant>
    <organismsDiffer>false</organismsDiffer>
    <experiments>9</experiments>
</comment>
<comment type="interaction">
    <interactant intactId="EBI-8025850">
        <id>O14770-4</id>
    </interactant>
    <interactant intactId="EBI-10302990">
        <id>Q9BYU1</id>
        <label>PBX4</label>
    </interactant>
    <organismsDiffer>false</organismsDiffer>
    <experiments>6</experiments>
</comment>
<comment type="interaction">
    <interactant intactId="EBI-8025850">
        <id>O14770-4</id>
    </interactant>
    <interactant intactId="EBI-943588">
        <id>Q16633</id>
        <label>POU2AF1</label>
    </interactant>
    <organismsDiffer>false</organismsDiffer>
    <experiments>3</experiments>
</comment>
<comment type="interaction">
    <interactant intactId="EBI-8025850">
        <id>O14770-4</id>
    </interactant>
    <interactant intactId="EBI-12029004">
        <id>P78424</id>
        <label>POU6F2</label>
    </interactant>
    <organismsDiffer>false</organismsDiffer>
    <experiments>3</experiments>
</comment>
<comment type="interaction">
    <interactant intactId="EBI-8025850">
        <id>O14770-4</id>
    </interactant>
    <interactant intactId="EBI-1383632">
        <id>Q13882</id>
        <label>PTK6</label>
    </interactant>
    <organismsDiffer>false</organismsDiffer>
    <experiments>3</experiments>
</comment>
<comment type="interaction">
    <interactant intactId="EBI-8025850">
        <id>O14770-4</id>
    </interactant>
    <interactant intactId="EBI-6257312">
        <id>Q9BVN2</id>
        <label>RUSC1</label>
    </interactant>
    <organismsDiffer>false</organismsDiffer>
    <experiments>3</experiments>
</comment>
<comment type="interaction">
    <interactant intactId="EBI-8025850">
        <id>O14770-4</id>
    </interactant>
    <interactant intactId="EBI-12844598">
        <id>P09683</id>
        <label>SCT</label>
    </interactant>
    <organismsDiffer>false</organismsDiffer>
    <experiments>3</experiments>
</comment>
<comment type="interaction">
    <interactant intactId="EBI-8025850">
        <id>O14770-4</id>
    </interactant>
    <interactant intactId="EBI-10269322">
        <id>Q8NCR6</id>
        <label>SPMIP6</label>
    </interactant>
    <organismsDiffer>false</organismsDiffer>
    <experiments>3</experiments>
</comment>
<comment type="interaction">
    <interactant intactId="EBI-8025850">
        <id>O14770-4</id>
    </interactant>
    <interactant intactId="EBI-2853051">
        <id>Q13207</id>
        <label>TBX2</label>
    </interactant>
    <organismsDiffer>false</organismsDiffer>
    <experiments>3</experiments>
</comment>
<comment type="interaction">
    <interactant intactId="EBI-8025850">
        <id>O14770-4</id>
    </interactant>
    <interactant intactId="EBI-1200382">
        <id>Q9Y5J6</id>
        <label>TIMM10B</label>
    </interactant>
    <organismsDiffer>false</organismsDiffer>
    <experiments>3</experiments>
</comment>
<comment type="interaction">
    <interactant intactId="EBI-8025850">
        <id>O14770-4</id>
    </interactant>
    <interactant intactId="EBI-5235829">
        <id>Q8IWZ5</id>
        <label>TRIM42</label>
    </interactant>
    <organismsDiffer>false</organismsDiffer>
    <experiments>3</experiments>
</comment>
<comment type="interaction">
    <interactant intactId="EBI-8025850">
        <id>O14770-4</id>
    </interactant>
    <interactant intactId="EBI-11983165">
        <id>Q99990</id>
        <label>VGLL1</label>
    </interactant>
    <organismsDiffer>false</organismsDiffer>
    <experiments>3</experiments>
</comment>
<comment type="interaction">
    <interactant intactId="EBI-25848073">
        <id>O14770-7</id>
    </interactant>
    <interactant intactId="EBI-50433196">
        <id>A0A6Q8PF08</id>
        <label>PMP22</label>
    </interactant>
    <organismsDiffer>false</organismsDiffer>
    <experiments>3</experiments>
</comment>
<comment type="subcellular location">
    <subcellularLocation>
        <location evidence="4">Nucleus</location>
    </subcellularLocation>
    <subcellularLocation>
        <location evidence="2">Cytoplasm</location>
        <location evidence="2">Perinuclear region</location>
    </subcellularLocation>
</comment>
<comment type="alternative products">
    <event type="alternative splicing"/>
    <isoform>
        <id>O14770-1</id>
        <name>1</name>
        <name>Meis2C</name>
        <sequence type="displayed"/>
    </isoform>
    <isoform>
        <id>O14770-2</id>
        <name>2</name>
        <name>Meis2A</name>
        <sequence type="described" ref="VSP_002245 VSP_002246"/>
    </isoform>
    <isoform>
        <id>O14770-3</id>
        <name>3</name>
        <name>Meis2B</name>
        <sequence type="described" ref="VSP_002242 VSP_002245 VSP_002246"/>
    </isoform>
    <isoform>
        <id>O14770-4</id>
        <name>4</name>
        <name>Meis2D</name>
        <sequence type="described" ref="VSP_002242"/>
    </isoform>
    <isoform>
        <id>O14770-5</id>
        <name>5</name>
        <name>Meis2E</name>
        <sequence type="described" ref="VSP_002243 VSP_002244"/>
    </isoform>
    <isoform>
        <id>O14770-6</id>
        <name>6</name>
        <sequence type="described" ref="VSP_043219 VSP_002242 VSP_002245 VSP_002246"/>
    </isoform>
    <isoform>
        <id>O14770-7</id>
        <name>7</name>
        <sequence type="described" ref="VSP_043494 VSP_002242 VSP_002245 VSP_002246"/>
    </isoform>
    <isoform>
        <id>O14770-8</id>
        <name>8</name>
        <sequence type="described" ref="VSP_043494 VSP_002245 VSP_002246"/>
    </isoform>
</comment>
<comment type="tissue specificity">
    <text>Expressed in various tissues. Expressed at high level in the lymphoid organs of hematopoietic tissues. Also expressed in some regions of the brain, such as the putamen.</text>
</comment>
<comment type="developmental stage">
    <text evidence="9">Expressed in the proliferative zones of the fetal neocortex. Expressed at a very high level in the developing ganglionic eminence and at a more moderate level in the cortical plate.</text>
</comment>
<comment type="disease" evidence="12 13 15">
    <disease id="DI-05007">
        <name>Cleft palate, cardiac defects, and impaired intellectual development</name>
        <acronym>CPCMR</acronym>
        <description>An autosomal dominant disease characterized by multiple congenital malformations, mild-to-severe intellectual disability with poor speech, and delayed psychomotor development. Congenital malformations include heart defects, cleft lip/palate, distally-placed thumbs and toes, and cutaneous syndactyly between the second and third toes.</description>
        <dbReference type="MIM" id="600987"/>
    </disease>
    <text>The disease is caused by variants affecting the gene represented in this entry.</text>
</comment>
<comment type="similarity">
    <text evidence="21">Belongs to the TALE/MEIS homeobox family.</text>
</comment>
<protein>
    <recommendedName>
        <fullName>Homeobox protein Meis2</fullName>
    </recommendedName>
    <alternativeName>
        <fullName>Meis1-related protein 1</fullName>
    </alternativeName>
</protein>
<sequence>MAQRYDELPHYGGMDGVGVPASMYGDPHAPRPIPPVHHLNHGPPLHATQHYGAHAPHPNVMPASMGSAVNDALKRDKDAIYGHPLFPLLALVFEKCELATCTPREPGVAGGDVCSSDSFNEDIAVFAKQVRAEKPLFSSNPELDNLMIQAIQVLRFHLLELEKVHELCDNFCHRYISCLKGKMPIDLVIDERDGSSKSDHEELSGSSTNLADHNPSSWRDHDDATSTHSAGTPGPSSGGHASQSGDNSSEQGDGLDNSVASPGTGDDDDPDKDKKRQKKRGIFPKVATNIMRAWLFQHLTHPYPSEEQKKQLAQDTGLTILQVNNWFINARRRIVQPMIDQSNRAGFLLDPSVSQGAAYSPEGQPMGSFVLDGQQHMGIRPAGLQSMPGDYVSQGGPMGMSMAQPSYTPPQMTPHPTQLRHGPPMHSYLPSHPHHPAMMMHGGPPTHPGMTMSAQSPTMLNSVDPNVGGQVMDIHAQ</sequence>
<name>MEIS2_HUMAN</name>
<feature type="chain" id="PRO_0000049108" description="Homeobox protein Meis2">
    <location>
        <begin position="1"/>
        <end position="477"/>
    </location>
</feature>
<feature type="domain" description="MEIS N-terminal" evidence="3">
    <location>
        <begin position="110"/>
        <end position="193"/>
    </location>
</feature>
<feature type="DNA-binding region" description="Homeobox; TALE-type" evidence="4">
    <location>
        <begin position="276"/>
        <end position="338"/>
    </location>
</feature>
<feature type="region of interest" description="Required for interaction with PBX1" evidence="1">
    <location>
        <begin position="71"/>
        <end position="191"/>
    </location>
</feature>
<feature type="region of interest" description="Disordered" evidence="5">
    <location>
        <begin position="193"/>
        <end position="283"/>
    </location>
</feature>
<feature type="region of interest" description="Interaction with DNA" evidence="22 23">
    <location>
        <begin position="299"/>
        <end position="333"/>
    </location>
</feature>
<feature type="region of interest" description="Transcriptional activation domain">
    <location>
        <begin position="340"/>
        <end position="477"/>
    </location>
</feature>
<feature type="compositionally biased region" description="Basic and acidic residues" evidence="5">
    <location>
        <begin position="193"/>
        <end position="203"/>
    </location>
</feature>
<feature type="compositionally biased region" description="Polar residues" evidence="5">
    <location>
        <begin position="204"/>
        <end position="217"/>
    </location>
</feature>
<feature type="compositionally biased region" description="Polar residues" evidence="5">
    <location>
        <begin position="239"/>
        <end position="251"/>
    </location>
</feature>
<feature type="splice variant" id="VSP_043219" description="In isoform 6." evidence="18">
    <original>MAQRYDELPHYGGMDGVGVPASMYGDPHAPRPIPPVHHLNHGPPLHATQHYGAHAPHPNVMPASMGSAVNDALKRDKDAIYGHPLFPLL</original>
    <variation>M</variation>
    <location>
        <begin position="1"/>
        <end position="89"/>
    </location>
</feature>
<feature type="splice variant" id="VSP_043494" description="In isoform 7 and isoform 8." evidence="18 19">
    <location>
        <begin position="1"/>
        <end position="13"/>
    </location>
</feature>
<feature type="splice variant" id="VSP_002243" description="In isoform 5." evidence="17">
    <original>HP</original>
    <variation>VY</variation>
    <location>
        <begin position="301"/>
        <end position="302"/>
    </location>
</feature>
<feature type="splice variant" id="VSP_002244" description="In isoform 5." evidence="17">
    <location>
        <begin position="303"/>
        <end position="477"/>
    </location>
</feature>
<feature type="splice variant" id="VSP_002242" description="In isoform 3, isoform 4, isoform 6 and isoform 7." evidence="17 18 19 20">
    <location>
        <begin position="346"/>
        <end position="352"/>
    </location>
</feature>
<feature type="splice variant" id="VSP_002245" description="In isoform 2, isoform 3, isoform 6, isoform 7 and isoform 8." evidence="17 18 19 20">
    <original>LQSMPGDYVSQGGPMGMS</original>
    <variation>PMSGMGMNMGMDGQWHYM</variation>
    <location>
        <begin position="384"/>
        <end position="401"/>
    </location>
</feature>
<feature type="splice variant" id="VSP_002246" description="In isoform 2, isoform 3, isoform 6, isoform 7 and isoform 8." evidence="17 18 19 20">
    <location>
        <begin position="402"/>
        <end position="477"/>
    </location>
</feature>
<feature type="sequence variant" id="VAR_078978" description="In CPCMR." evidence="15">
    <location>
        <begin position="204"/>
        <end position="477"/>
    </location>
</feature>
<feature type="sequence variant" id="VAR_078979" description="In CPCMR." evidence="13">
    <location>
        <position position="333"/>
    </location>
</feature>
<feature type="mutagenesis site" description="Impairs interaction with PBX1; when associated with A-88." evidence="10">
    <original>L</original>
    <variation>A</variation>
    <location>
        <position position="85"/>
    </location>
</feature>
<feature type="mutagenesis site" description="Impairs interaction with PBX1; when associated with A-85. HELIX 285 297." evidence="10">
    <original>L</original>
    <variation>A</variation>
    <location>
        <position position="88"/>
    </location>
</feature>
<feature type="mutagenesis site" description="Impairs interaction with PBX1." evidence="10">
    <original>EKCE</original>
    <variation>NNGT</variation>
    <location>
        <begin position="94"/>
        <end position="97"/>
    </location>
</feature>
<feature type="mutagenesis site" description="Impairs interaction with PBX1; when associated with A-154." evidence="10">
    <original>I</original>
    <variation>A</variation>
    <location>
        <position position="151"/>
    </location>
</feature>
<feature type="mutagenesis site" description="Impairs interaction with PBX1; when associated with A-151." evidence="10">
    <original>L</original>
    <variation>A</variation>
    <location>
        <position position="154"/>
    </location>
</feature>
<feature type="mutagenesis site" description="Impairs interaction with PBX1; when associated with A-161." evidence="10">
    <original>LL</original>
    <variation>AA</variation>
    <location>
        <begin position="158"/>
        <end position="159"/>
    </location>
</feature>
<feature type="mutagenesis site" description="Impairs interaction with PBX1; when associated with 158-A-A-159." evidence="10">
    <original>L</original>
    <variation>A</variation>
    <location>
        <position position="161"/>
    </location>
</feature>
<feature type="mutagenesis site" description="Impairs DNA binding and PBX1-dependent transcriptional activation. No effect on interaction with PBX1." evidence="10 11">
    <original>R</original>
    <variation>M</variation>
    <location>
        <position position="332"/>
    </location>
</feature>
<feature type="helix" evidence="29">
    <location>
        <begin position="287"/>
        <end position="296"/>
    </location>
</feature>
<feature type="turn" evidence="28">
    <location>
        <begin position="298"/>
        <end position="300"/>
    </location>
</feature>
<feature type="helix" evidence="29">
    <location>
        <begin position="306"/>
        <end position="316"/>
    </location>
</feature>
<feature type="helix" evidence="29">
    <location>
        <begin position="320"/>
        <end position="333"/>
    </location>
</feature>
<feature type="helix" evidence="29">
    <location>
        <begin position="335"/>
        <end position="339"/>
    </location>
</feature>
<dbReference type="EMBL" id="AF178948">
    <property type="protein sequence ID" value="AAF81638.1"/>
    <property type="molecule type" value="mRNA"/>
</dbReference>
<dbReference type="EMBL" id="AF179896">
    <property type="protein sequence ID" value="AAF81639.1"/>
    <property type="molecule type" value="mRNA"/>
</dbReference>
<dbReference type="EMBL" id="AF179897">
    <property type="protein sequence ID" value="AAF81640.1"/>
    <property type="molecule type" value="mRNA"/>
</dbReference>
<dbReference type="EMBL" id="AF179898">
    <property type="protein sequence ID" value="AAF81641.1"/>
    <property type="molecule type" value="mRNA"/>
</dbReference>
<dbReference type="EMBL" id="AF179899">
    <property type="protein sequence ID" value="AAF81642.1"/>
    <property type="molecule type" value="mRNA"/>
</dbReference>
<dbReference type="EMBL" id="AK056038">
    <property type="protein sequence ID" value="BAG51610.1"/>
    <property type="molecule type" value="mRNA"/>
</dbReference>
<dbReference type="EMBL" id="AK056620">
    <property type="protein sequence ID" value="BAG51768.1"/>
    <property type="molecule type" value="mRNA"/>
</dbReference>
<dbReference type="EMBL" id="AC018563">
    <property type="status" value="NOT_ANNOTATED_CDS"/>
    <property type="molecule type" value="Genomic_DNA"/>
</dbReference>
<dbReference type="EMBL" id="AC069483">
    <property type="status" value="NOT_ANNOTATED_CDS"/>
    <property type="molecule type" value="Genomic_DNA"/>
</dbReference>
<dbReference type="EMBL" id="AC078909">
    <property type="status" value="NOT_ANNOTATED_CDS"/>
    <property type="molecule type" value="Genomic_DNA"/>
</dbReference>
<dbReference type="EMBL" id="CH471125">
    <property type="protein sequence ID" value="EAW92353.1"/>
    <property type="molecule type" value="Genomic_DNA"/>
</dbReference>
<dbReference type="EMBL" id="CH471125">
    <property type="protein sequence ID" value="EAW92354.1"/>
    <property type="molecule type" value="Genomic_DNA"/>
</dbReference>
<dbReference type="EMBL" id="CH471125">
    <property type="protein sequence ID" value="EAW92356.1"/>
    <property type="molecule type" value="Genomic_DNA"/>
</dbReference>
<dbReference type="EMBL" id="BC001516">
    <property type="protein sequence ID" value="AAH01516.1"/>
    <property type="molecule type" value="mRNA"/>
</dbReference>
<dbReference type="EMBL" id="BC001844">
    <property type="protein sequence ID" value="AAH01844.3"/>
    <property type="molecule type" value="mRNA"/>
</dbReference>
<dbReference type="EMBL" id="BC007202">
    <property type="protein sequence ID" value="AAH07202.1"/>
    <property type="molecule type" value="mRNA"/>
</dbReference>
<dbReference type="EMBL" id="BC050431">
    <property type="protein sequence ID" value="AAH50431.1"/>
    <property type="molecule type" value="mRNA"/>
</dbReference>
<dbReference type="EMBL" id="AF017418">
    <property type="protein sequence ID" value="AAB70270.1"/>
    <property type="molecule type" value="mRNA"/>
</dbReference>
<dbReference type="CCDS" id="CCDS10044.1">
    <molecule id="O14770-1"/>
</dbReference>
<dbReference type="CCDS" id="CCDS10045.1">
    <molecule id="O14770-4"/>
</dbReference>
<dbReference type="CCDS" id="CCDS42014.1">
    <molecule id="O14770-7"/>
</dbReference>
<dbReference type="CCDS" id="CCDS45217.1">
    <molecule id="O14770-2"/>
</dbReference>
<dbReference type="CCDS" id="CCDS45218.1">
    <molecule id="O14770-3"/>
</dbReference>
<dbReference type="CCDS" id="CCDS45219.1">
    <molecule id="O14770-8"/>
</dbReference>
<dbReference type="RefSeq" id="NP_001207411.1">
    <molecule id="O14770-4"/>
    <property type="nucleotide sequence ID" value="NM_001220482.2"/>
</dbReference>
<dbReference type="RefSeq" id="NP_002390.1">
    <molecule id="O14770-7"/>
    <property type="nucleotide sequence ID" value="NM_002399.4"/>
</dbReference>
<dbReference type="RefSeq" id="NP_733774.1">
    <molecule id="O14770-3"/>
    <property type="nucleotide sequence ID" value="NM_170674.5"/>
</dbReference>
<dbReference type="RefSeq" id="NP_733775.1">
    <molecule id="O14770-1"/>
    <property type="nucleotide sequence ID" value="NM_170675.5"/>
</dbReference>
<dbReference type="RefSeq" id="NP_733776.1">
    <molecule id="O14770-4"/>
    <property type="nucleotide sequence ID" value="NM_170676.5"/>
</dbReference>
<dbReference type="RefSeq" id="NP_733777.1">
    <molecule id="O14770-2"/>
    <property type="nucleotide sequence ID" value="NM_170677.5"/>
</dbReference>
<dbReference type="RefSeq" id="NP_758526.1">
    <molecule id="O14770-8"/>
    <property type="nucleotide sequence ID" value="NM_172315.3"/>
</dbReference>
<dbReference type="RefSeq" id="NP_758527.1">
    <molecule id="O14770-6"/>
    <property type="nucleotide sequence ID" value="NM_172316.3"/>
</dbReference>
<dbReference type="RefSeq" id="XP_016877694.1">
    <property type="nucleotide sequence ID" value="XM_017022205.1"/>
</dbReference>
<dbReference type="PDB" id="3K2A">
    <property type="method" value="X-ray"/>
    <property type="resolution" value="1.95 A"/>
    <property type="chains" value="A/B=281-345"/>
</dbReference>
<dbReference type="PDB" id="4XRM">
    <property type="method" value="X-ray"/>
    <property type="resolution" value="1.60 A"/>
    <property type="chains" value="A/B=281-342"/>
</dbReference>
<dbReference type="PDB" id="5BNG">
    <property type="method" value="X-ray"/>
    <property type="resolution" value="3.50 A"/>
    <property type="chains" value="A/B=283-342"/>
</dbReference>
<dbReference type="PDB" id="5EG0">
    <property type="method" value="X-ray"/>
    <property type="resolution" value="3.10 A"/>
    <property type="chains" value="A=284-338"/>
</dbReference>
<dbReference type="PDBsum" id="3K2A"/>
<dbReference type="PDBsum" id="4XRM"/>
<dbReference type="PDBsum" id="5BNG"/>
<dbReference type="PDBsum" id="5EG0"/>
<dbReference type="SMR" id="O14770"/>
<dbReference type="BioGRID" id="110376">
    <property type="interactions" value="90"/>
</dbReference>
<dbReference type="DIP" id="DIP-61027N"/>
<dbReference type="FunCoup" id="O14770">
    <property type="interactions" value="1907"/>
</dbReference>
<dbReference type="IntAct" id="O14770">
    <property type="interactions" value="77"/>
</dbReference>
<dbReference type="MINT" id="O14770"/>
<dbReference type="STRING" id="9606.ENSP00000453793"/>
<dbReference type="GlyGen" id="O14770">
    <property type="glycosylation" value="1 site, 1 O-linked glycan (1 site)"/>
</dbReference>
<dbReference type="iPTMnet" id="O14770"/>
<dbReference type="PhosphoSitePlus" id="O14770"/>
<dbReference type="BioMuta" id="MEIS2"/>
<dbReference type="jPOST" id="O14770"/>
<dbReference type="MassIVE" id="O14770"/>
<dbReference type="PaxDb" id="9606-ENSP00000453793"/>
<dbReference type="PeptideAtlas" id="O14770"/>
<dbReference type="ProteomicsDB" id="48214">
    <molecule id="O14770-1"/>
</dbReference>
<dbReference type="ProteomicsDB" id="48215">
    <molecule id="O14770-2"/>
</dbReference>
<dbReference type="ProteomicsDB" id="48216">
    <molecule id="O14770-3"/>
</dbReference>
<dbReference type="ProteomicsDB" id="48217">
    <molecule id="O14770-4"/>
</dbReference>
<dbReference type="ProteomicsDB" id="48218">
    <molecule id="O14770-5"/>
</dbReference>
<dbReference type="ProteomicsDB" id="48219">
    <molecule id="O14770-6"/>
</dbReference>
<dbReference type="ProteomicsDB" id="48220">
    <molecule id="O14770-7"/>
</dbReference>
<dbReference type="ProteomicsDB" id="48221">
    <molecule id="O14770-8"/>
</dbReference>
<dbReference type="Pumba" id="O14770"/>
<dbReference type="Antibodypedia" id="918">
    <property type="antibodies" value="312 antibodies from 35 providers"/>
</dbReference>
<dbReference type="DNASU" id="4212"/>
<dbReference type="Ensembl" id="ENST00000314177.12">
    <molecule id="O14770-5"/>
    <property type="protein sequence ID" value="ENSP00000326296.8"/>
    <property type="gene ID" value="ENSG00000134138.22"/>
</dbReference>
<dbReference type="Ensembl" id="ENST00000338564.9">
    <molecule id="O14770-4"/>
    <property type="protein sequence ID" value="ENSP00000341400.4"/>
    <property type="gene ID" value="ENSG00000134138.22"/>
</dbReference>
<dbReference type="Ensembl" id="ENST00000340545.9">
    <molecule id="O14770-7"/>
    <property type="protein sequence ID" value="ENSP00000339549.5"/>
    <property type="gene ID" value="ENSG00000134138.22"/>
</dbReference>
<dbReference type="Ensembl" id="ENST00000424352.6">
    <molecule id="O14770-2"/>
    <property type="protein sequence ID" value="ENSP00000404185.2"/>
    <property type="gene ID" value="ENSG00000134138.22"/>
</dbReference>
<dbReference type="Ensembl" id="ENST00000557796.6">
    <molecule id="O14770-7"/>
    <property type="protein sequence ID" value="ENSP00000452693.2"/>
    <property type="gene ID" value="ENSG00000134138.22"/>
</dbReference>
<dbReference type="Ensembl" id="ENST00000559085.5">
    <molecule id="O14770-8"/>
    <property type="protein sequence ID" value="ENSP00000453390.1"/>
    <property type="gene ID" value="ENSG00000134138.22"/>
</dbReference>
<dbReference type="Ensembl" id="ENST00000559561.5">
    <molecule id="O14770-3"/>
    <property type="protein sequence ID" value="ENSP00000453497.1"/>
    <property type="gene ID" value="ENSG00000134138.22"/>
</dbReference>
<dbReference type="Ensembl" id="ENST00000561208.6">
    <molecule id="O14770-1"/>
    <property type="protein sequence ID" value="ENSP00000453793.1"/>
    <property type="gene ID" value="ENSG00000134138.22"/>
</dbReference>
<dbReference type="Ensembl" id="ENST00000699903.1">
    <molecule id="O14770-7"/>
    <property type="protein sequence ID" value="ENSP00000514679.1"/>
    <property type="gene ID" value="ENSG00000134138.22"/>
</dbReference>
<dbReference type="GeneID" id="4212"/>
<dbReference type="KEGG" id="hsa:4212"/>
<dbReference type="MANE-Select" id="ENST00000561208.6">
    <property type="protein sequence ID" value="ENSP00000453793.1"/>
    <property type="RefSeq nucleotide sequence ID" value="NM_170675.5"/>
    <property type="RefSeq protein sequence ID" value="NP_733775.1"/>
</dbReference>
<dbReference type="UCSC" id="uc001zjl.4">
    <molecule id="O14770-1"/>
    <property type="organism name" value="human"/>
</dbReference>
<dbReference type="AGR" id="HGNC:7001"/>
<dbReference type="CTD" id="4212"/>
<dbReference type="DisGeNET" id="4212"/>
<dbReference type="GeneCards" id="MEIS2"/>
<dbReference type="HGNC" id="HGNC:7001">
    <property type="gene designation" value="MEIS2"/>
</dbReference>
<dbReference type="HPA" id="ENSG00000134138">
    <property type="expression patterns" value="Tissue enhanced (salivary)"/>
</dbReference>
<dbReference type="MalaCards" id="MEIS2"/>
<dbReference type="MIM" id="600987">
    <property type="type" value="phenotype"/>
</dbReference>
<dbReference type="MIM" id="601740">
    <property type="type" value="gene"/>
</dbReference>
<dbReference type="neXtProt" id="NX_O14770"/>
<dbReference type="OpenTargets" id="ENSG00000134138"/>
<dbReference type="Orphanet" id="261190">
    <property type="disease" value="Cleft palate-congenital heart defect-intellectual disability syndrome due to 15q14 microdeletion"/>
</dbReference>
<dbReference type="PharmGKB" id="PA30741"/>
<dbReference type="VEuPathDB" id="HostDB:ENSG00000134138"/>
<dbReference type="eggNOG" id="KOG0773">
    <property type="taxonomic scope" value="Eukaryota"/>
</dbReference>
<dbReference type="GeneTree" id="ENSGT00940000155643"/>
<dbReference type="HOGENOM" id="CLU_023139_0_0_1"/>
<dbReference type="InParanoid" id="O14770"/>
<dbReference type="OMA" id="TYANPHQ"/>
<dbReference type="OrthoDB" id="10056939at2759"/>
<dbReference type="PAN-GO" id="O14770">
    <property type="GO annotations" value="8 GO annotations based on evolutionary models"/>
</dbReference>
<dbReference type="PhylomeDB" id="O14770"/>
<dbReference type="TreeFam" id="TF318093"/>
<dbReference type="PathwayCommons" id="O14770"/>
<dbReference type="SignaLink" id="O14770"/>
<dbReference type="SIGNOR" id="O14770"/>
<dbReference type="BioGRID-ORCS" id="4212">
    <property type="hits" value="28 hits in 1184 CRISPR screens"/>
</dbReference>
<dbReference type="ChiTaRS" id="MEIS2">
    <property type="organism name" value="human"/>
</dbReference>
<dbReference type="EvolutionaryTrace" id="O14770"/>
<dbReference type="GeneWiki" id="MEIS2"/>
<dbReference type="GenomeRNAi" id="4212"/>
<dbReference type="Pharos" id="O14770">
    <property type="development level" value="Tbio"/>
</dbReference>
<dbReference type="PRO" id="PR:O14770"/>
<dbReference type="Proteomes" id="UP000005640">
    <property type="component" value="Chromosome 15"/>
</dbReference>
<dbReference type="RNAct" id="O14770">
    <property type="molecule type" value="protein"/>
</dbReference>
<dbReference type="Bgee" id="ENSG00000134138">
    <property type="expression patterns" value="Expressed in ventricular zone and 198 other cell types or tissues"/>
</dbReference>
<dbReference type="ExpressionAtlas" id="O14770">
    <property type="expression patterns" value="baseline and differential"/>
</dbReference>
<dbReference type="GO" id="GO:0000785">
    <property type="term" value="C:chromatin"/>
    <property type="evidence" value="ECO:0000247"/>
    <property type="project" value="NTNU_SB"/>
</dbReference>
<dbReference type="GO" id="GO:0005634">
    <property type="term" value="C:nucleus"/>
    <property type="evidence" value="ECO:0007669"/>
    <property type="project" value="UniProtKB-SubCell"/>
</dbReference>
<dbReference type="GO" id="GO:0048471">
    <property type="term" value="C:perinuclear region of cytoplasm"/>
    <property type="evidence" value="ECO:0007669"/>
    <property type="project" value="UniProtKB-SubCell"/>
</dbReference>
<dbReference type="GO" id="GO:0003677">
    <property type="term" value="F:DNA binding"/>
    <property type="evidence" value="ECO:0000314"/>
    <property type="project" value="UniProtKB"/>
</dbReference>
<dbReference type="GO" id="GO:0001228">
    <property type="term" value="F:DNA-binding transcription activator activity, RNA polymerase II-specific"/>
    <property type="evidence" value="ECO:0000314"/>
    <property type="project" value="NTNU_SB"/>
</dbReference>
<dbReference type="GO" id="GO:0000981">
    <property type="term" value="F:DNA-binding transcription factor activity, RNA polymerase II-specific"/>
    <property type="evidence" value="ECO:0000247"/>
    <property type="project" value="NTNU_SB"/>
</dbReference>
<dbReference type="GO" id="GO:0000978">
    <property type="term" value="F:RNA polymerase II cis-regulatory region sequence-specific DNA binding"/>
    <property type="evidence" value="ECO:0000314"/>
    <property type="project" value="NTNU_SB"/>
</dbReference>
<dbReference type="GO" id="GO:0043565">
    <property type="term" value="F:sequence-specific DNA binding"/>
    <property type="evidence" value="ECO:0000314"/>
    <property type="project" value="MGI"/>
</dbReference>
<dbReference type="GO" id="GO:1990837">
    <property type="term" value="F:sequence-specific double-stranded DNA binding"/>
    <property type="evidence" value="ECO:0000314"/>
    <property type="project" value="ARUK-UCL"/>
</dbReference>
<dbReference type="GO" id="GO:0008134">
    <property type="term" value="F:transcription factor binding"/>
    <property type="evidence" value="ECO:0000250"/>
    <property type="project" value="UniProtKB"/>
</dbReference>
<dbReference type="GO" id="GO:0009887">
    <property type="term" value="P:animal organ morphogenesis"/>
    <property type="evidence" value="ECO:0000318"/>
    <property type="project" value="GO_Central"/>
</dbReference>
<dbReference type="GO" id="GO:0007420">
    <property type="term" value="P:brain development"/>
    <property type="evidence" value="ECO:0000318"/>
    <property type="project" value="GO_Central"/>
</dbReference>
<dbReference type="GO" id="GO:0009880">
    <property type="term" value="P:embryonic pattern specification"/>
    <property type="evidence" value="ECO:0000318"/>
    <property type="project" value="GO_Central"/>
</dbReference>
<dbReference type="GO" id="GO:0001654">
    <property type="term" value="P:eye development"/>
    <property type="evidence" value="ECO:0000318"/>
    <property type="project" value="GO_Central"/>
</dbReference>
<dbReference type="GO" id="GO:0045638">
    <property type="term" value="P:negative regulation of myeloid cell differentiation"/>
    <property type="evidence" value="ECO:0000250"/>
    <property type="project" value="UniProtKB"/>
</dbReference>
<dbReference type="GO" id="GO:0000122">
    <property type="term" value="P:negative regulation of transcription by RNA polymerase II"/>
    <property type="evidence" value="ECO:0000304"/>
    <property type="project" value="ProtInc"/>
</dbReference>
<dbReference type="GO" id="GO:0031016">
    <property type="term" value="P:pancreas development"/>
    <property type="evidence" value="ECO:0007669"/>
    <property type="project" value="Ensembl"/>
</dbReference>
<dbReference type="GO" id="GO:0110024">
    <property type="term" value="P:positive regulation of cardiac muscle myoblast proliferation"/>
    <property type="evidence" value="ECO:0000314"/>
    <property type="project" value="BHF-UCL"/>
</dbReference>
<dbReference type="GO" id="GO:0008284">
    <property type="term" value="P:positive regulation of cell population proliferation"/>
    <property type="evidence" value="ECO:0000318"/>
    <property type="project" value="GO_Central"/>
</dbReference>
<dbReference type="GO" id="GO:0045931">
    <property type="term" value="P:positive regulation of mitotic cell cycle"/>
    <property type="evidence" value="ECO:0000314"/>
    <property type="project" value="BHF-UCL"/>
</dbReference>
<dbReference type="GO" id="GO:0045944">
    <property type="term" value="P:positive regulation of transcription by RNA polymerase II"/>
    <property type="evidence" value="ECO:0000314"/>
    <property type="project" value="NTNU_SB"/>
</dbReference>
<dbReference type="GO" id="GO:0070848">
    <property type="term" value="P:response to growth factor"/>
    <property type="evidence" value="ECO:0007669"/>
    <property type="project" value="Ensembl"/>
</dbReference>
<dbReference type="GO" id="GO:0009612">
    <property type="term" value="P:response to mechanical stimulus"/>
    <property type="evidence" value="ECO:0007669"/>
    <property type="project" value="Ensembl"/>
</dbReference>
<dbReference type="GO" id="GO:0008542">
    <property type="term" value="P:visual learning"/>
    <property type="evidence" value="ECO:0007669"/>
    <property type="project" value="Ensembl"/>
</dbReference>
<dbReference type="CDD" id="cd00086">
    <property type="entry name" value="homeodomain"/>
    <property type="match status" value="1"/>
</dbReference>
<dbReference type="FunFam" id="1.10.10.60:FF:000004">
    <property type="entry name" value="Meis2 homeobox isoform 2c"/>
    <property type="match status" value="1"/>
</dbReference>
<dbReference type="Gene3D" id="1.10.10.60">
    <property type="entry name" value="Homeodomain-like"/>
    <property type="match status" value="1"/>
</dbReference>
<dbReference type="InterPro" id="IPR001356">
    <property type="entry name" value="HD"/>
</dbReference>
<dbReference type="InterPro" id="IPR009057">
    <property type="entry name" value="Homeodomain-like_sf"/>
</dbReference>
<dbReference type="InterPro" id="IPR008422">
    <property type="entry name" value="KN_HD"/>
</dbReference>
<dbReference type="InterPro" id="IPR032453">
    <property type="entry name" value="PKNOX/Meis_N"/>
</dbReference>
<dbReference type="InterPro" id="IPR050224">
    <property type="entry name" value="TALE_homeobox"/>
</dbReference>
<dbReference type="PANTHER" id="PTHR11850">
    <property type="entry name" value="HOMEOBOX PROTEIN TRANSCRIPTION FACTORS"/>
    <property type="match status" value="1"/>
</dbReference>
<dbReference type="Pfam" id="PF05920">
    <property type="entry name" value="Homeobox_KN"/>
    <property type="match status" value="1"/>
</dbReference>
<dbReference type="Pfam" id="PF16493">
    <property type="entry name" value="Meis_PKNOX_N"/>
    <property type="match status" value="1"/>
</dbReference>
<dbReference type="SMART" id="SM00389">
    <property type="entry name" value="HOX"/>
    <property type="match status" value="1"/>
</dbReference>
<dbReference type="SUPFAM" id="SSF46689">
    <property type="entry name" value="Homeodomain-like"/>
    <property type="match status" value="1"/>
</dbReference>
<dbReference type="PROSITE" id="PS50071">
    <property type="entry name" value="HOMEOBOX_2"/>
    <property type="match status" value="1"/>
</dbReference>
<accession>O14770</accession>
<accession>A6NJI5</accession>
<accession>A8MWD5</accession>
<accession>B3KP98</accession>
<accession>B3KPQ6</accession>
<accession>Q96DI2</accession>
<accession>Q96KI4</accession>
<accession>Q96KI5</accession>
<accession>Q9NRS1</accession>
<accession>Q9NRS2</accession>
<accession>Q9NRS3</accession>
<keyword id="KW-0002">3D-structure</keyword>
<keyword id="KW-0010">Activator</keyword>
<keyword id="KW-0025">Alternative splicing</keyword>
<keyword id="KW-0963">Cytoplasm</keyword>
<keyword id="KW-0217">Developmental protein</keyword>
<keyword id="KW-0225">Disease variant</keyword>
<keyword id="KW-0238">DNA-binding</keyword>
<keyword id="KW-0371">Homeobox</keyword>
<keyword id="KW-0991">Intellectual disability</keyword>
<keyword id="KW-0539">Nucleus</keyword>
<keyword id="KW-1267">Proteomics identification</keyword>
<keyword id="KW-1185">Reference proteome</keyword>
<keyword id="KW-0804">Transcription</keyword>
<keyword id="KW-0805">Transcription regulation</keyword>
<gene>
    <name type="primary">MEIS2</name>
    <name type="synonym">MRG1</name>
</gene>